<proteinExistence type="evidence at protein level"/>
<organism>
    <name type="scientific">Arabidopsis thaliana</name>
    <name type="common">Mouse-ear cress</name>
    <dbReference type="NCBI Taxonomy" id="3702"/>
    <lineage>
        <taxon>Eukaryota</taxon>
        <taxon>Viridiplantae</taxon>
        <taxon>Streptophyta</taxon>
        <taxon>Embryophyta</taxon>
        <taxon>Tracheophyta</taxon>
        <taxon>Spermatophyta</taxon>
        <taxon>Magnoliopsida</taxon>
        <taxon>eudicotyledons</taxon>
        <taxon>Gunneridae</taxon>
        <taxon>Pentapetalae</taxon>
        <taxon>rosids</taxon>
        <taxon>malvids</taxon>
        <taxon>Brassicales</taxon>
        <taxon>Brassicaceae</taxon>
        <taxon>Camelineae</taxon>
        <taxon>Arabidopsis</taxon>
    </lineage>
</organism>
<evidence type="ECO:0000250" key="1">
    <source>
        <dbReference type="UniProtKB" id="Q9C8M9"/>
    </source>
</evidence>
<evidence type="ECO:0000255" key="2"/>
<evidence type="ECO:0000255" key="3">
    <source>
        <dbReference type="PROSITE-ProRule" id="PRU00159"/>
    </source>
</evidence>
<evidence type="ECO:0000256" key="4">
    <source>
        <dbReference type="SAM" id="MobiDB-lite"/>
    </source>
</evidence>
<evidence type="ECO:0000269" key="5">
    <source>
    </source>
</evidence>
<evidence type="ECO:0000305" key="6"/>
<gene>
    <name type="primary">SRF5</name>
    <name type="ordered locus">At1g78980</name>
    <name type="ORF">YUP8H12R.40</name>
</gene>
<reference key="1">
    <citation type="journal article" date="2007" name="BMC Plant Biol.">
        <title>Molecular characterisation of the STRUBBELIG-RECEPTOR FAMILY of genes encoding putative leucine-rich repeat receptor-like kinases in Arabidopsis thaliana.</title>
        <authorList>
            <person name="Eyueboglu B."/>
            <person name="Pfister K."/>
            <person name="Haberer G."/>
            <person name="Chevalier D."/>
            <person name="Fuchs A."/>
            <person name="Mayer K.F.X."/>
            <person name="Schneitz K."/>
        </authorList>
    </citation>
    <scope>NUCLEOTIDE SEQUENCE [MRNA]</scope>
    <scope>FUNCTION</scope>
    <scope>TISSUE SPECIFICITY</scope>
    <scope>DISRUPTION PHENOTYPE</scope>
    <source>
        <strain>cv. Columbia</strain>
    </source>
</reference>
<reference key="2">
    <citation type="journal article" date="2000" name="Nature">
        <title>Sequence and analysis of chromosome 1 of the plant Arabidopsis thaliana.</title>
        <authorList>
            <person name="Theologis A."/>
            <person name="Ecker J.R."/>
            <person name="Palm C.J."/>
            <person name="Federspiel N.A."/>
            <person name="Kaul S."/>
            <person name="White O."/>
            <person name="Alonso J."/>
            <person name="Altafi H."/>
            <person name="Araujo R."/>
            <person name="Bowman C.L."/>
            <person name="Brooks S.Y."/>
            <person name="Buehler E."/>
            <person name="Chan A."/>
            <person name="Chao Q."/>
            <person name="Chen H."/>
            <person name="Cheuk R.F."/>
            <person name="Chin C.W."/>
            <person name="Chung M.K."/>
            <person name="Conn L."/>
            <person name="Conway A.B."/>
            <person name="Conway A.R."/>
            <person name="Creasy T.H."/>
            <person name="Dewar K."/>
            <person name="Dunn P."/>
            <person name="Etgu P."/>
            <person name="Feldblyum T.V."/>
            <person name="Feng J.-D."/>
            <person name="Fong B."/>
            <person name="Fujii C.Y."/>
            <person name="Gill J.E."/>
            <person name="Goldsmith A.D."/>
            <person name="Haas B."/>
            <person name="Hansen N.F."/>
            <person name="Hughes B."/>
            <person name="Huizar L."/>
            <person name="Hunter J.L."/>
            <person name="Jenkins J."/>
            <person name="Johnson-Hopson C."/>
            <person name="Khan S."/>
            <person name="Khaykin E."/>
            <person name="Kim C.J."/>
            <person name="Koo H.L."/>
            <person name="Kremenetskaia I."/>
            <person name="Kurtz D.B."/>
            <person name="Kwan A."/>
            <person name="Lam B."/>
            <person name="Langin-Hooper S."/>
            <person name="Lee A."/>
            <person name="Lee J.M."/>
            <person name="Lenz C.A."/>
            <person name="Li J.H."/>
            <person name="Li Y.-P."/>
            <person name="Lin X."/>
            <person name="Liu S.X."/>
            <person name="Liu Z.A."/>
            <person name="Luros J.S."/>
            <person name="Maiti R."/>
            <person name="Marziali A."/>
            <person name="Militscher J."/>
            <person name="Miranda M."/>
            <person name="Nguyen M."/>
            <person name="Nierman W.C."/>
            <person name="Osborne B.I."/>
            <person name="Pai G."/>
            <person name="Peterson J."/>
            <person name="Pham P.K."/>
            <person name="Rizzo M."/>
            <person name="Rooney T."/>
            <person name="Rowley D."/>
            <person name="Sakano H."/>
            <person name="Salzberg S.L."/>
            <person name="Schwartz J.R."/>
            <person name="Shinn P."/>
            <person name="Southwick A.M."/>
            <person name="Sun H."/>
            <person name="Tallon L.J."/>
            <person name="Tambunga G."/>
            <person name="Toriumi M.J."/>
            <person name="Town C.D."/>
            <person name="Utterback T."/>
            <person name="Van Aken S."/>
            <person name="Vaysberg M."/>
            <person name="Vysotskaia V.S."/>
            <person name="Walker M."/>
            <person name="Wu D."/>
            <person name="Yu G."/>
            <person name="Fraser C.M."/>
            <person name="Venter J.C."/>
            <person name="Davis R.W."/>
        </authorList>
    </citation>
    <scope>NUCLEOTIDE SEQUENCE [LARGE SCALE GENOMIC DNA]</scope>
    <source>
        <strain>cv. Columbia</strain>
    </source>
</reference>
<reference key="3">
    <citation type="journal article" date="2017" name="Plant J.">
        <title>Araport11: a complete reannotation of the Arabidopsis thaliana reference genome.</title>
        <authorList>
            <person name="Cheng C.Y."/>
            <person name="Krishnakumar V."/>
            <person name="Chan A.P."/>
            <person name="Thibaud-Nissen F."/>
            <person name="Schobel S."/>
            <person name="Town C.D."/>
        </authorList>
    </citation>
    <scope>GENOME REANNOTATION</scope>
    <source>
        <strain>cv. Columbia</strain>
    </source>
</reference>
<name>SRF5_ARATH</name>
<feature type="signal peptide" evidence="2">
    <location>
        <begin position="1"/>
        <end position="22"/>
    </location>
</feature>
<feature type="chain" id="PRO_0000311845" description="Protein STRUBBELIG-RECEPTOR FAMILY 5">
    <location>
        <begin position="23"/>
        <end position="699"/>
    </location>
</feature>
<feature type="topological domain" description="Extracellular" evidence="2">
    <location>
        <begin position="23"/>
        <end position="273"/>
    </location>
</feature>
<feature type="transmembrane region" description="Helical" evidence="2">
    <location>
        <begin position="274"/>
        <end position="294"/>
    </location>
</feature>
<feature type="topological domain" description="Cytoplasmic" evidence="2">
    <location>
        <begin position="295"/>
        <end position="699"/>
    </location>
</feature>
<feature type="repeat" description="LRR 1">
    <location>
        <begin position="93"/>
        <end position="115"/>
    </location>
</feature>
<feature type="repeat" description="LRR 2">
    <location>
        <begin position="116"/>
        <end position="136"/>
    </location>
</feature>
<feature type="repeat" description="LRR 3">
    <location>
        <begin position="139"/>
        <end position="161"/>
    </location>
</feature>
<feature type="repeat" description="LRR 4">
    <location>
        <begin position="163"/>
        <end position="186"/>
    </location>
</feature>
<feature type="repeat" description="LRR 5">
    <location>
        <begin position="187"/>
        <end position="209"/>
    </location>
</feature>
<feature type="domain" description="Protein kinase" evidence="3">
    <location>
        <begin position="404"/>
        <end position="675"/>
    </location>
</feature>
<feature type="region of interest" description="Disordered" evidence="4">
    <location>
        <begin position="239"/>
        <end position="263"/>
    </location>
</feature>
<feature type="binding site" evidence="3">
    <location>
        <begin position="410"/>
        <end position="418"/>
    </location>
    <ligand>
        <name>ATP</name>
        <dbReference type="ChEBI" id="CHEBI:30616"/>
    </ligand>
</feature>
<feature type="binding site" evidence="3">
    <location>
        <position position="432"/>
    </location>
    <ligand>
        <name>ATP</name>
        <dbReference type="ChEBI" id="CHEBI:30616"/>
    </ligand>
</feature>
<feature type="modified residue" description="Phosphoserine" evidence="1">
    <location>
        <position position="368"/>
    </location>
</feature>
<feature type="glycosylation site" description="N-linked (GlcNAc...) asparagine" evidence="2">
    <location>
        <position position="184"/>
    </location>
</feature>
<keyword id="KW-0067">ATP-binding</keyword>
<keyword id="KW-0325">Glycoprotein</keyword>
<keyword id="KW-0433">Leucine-rich repeat</keyword>
<keyword id="KW-0472">Membrane</keyword>
<keyword id="KW-0547">Nucleotide-binding</keyword>
<keyword id="KW-0597">Phosphoprotein</keyword>
<keyword id="KW-0675">Receptor</keyword>
<keyword id="KW-1185">Reference proteome</keyword>
<keyword id="KW-0677">Repeat</keyword>
<keyword id="KW-0732">Signal</keyword>
<keyword id="KW-0812">Transmembrane</keyword>
<keyword id="KW-1133">Transmembrane helix</keyword>
<sequence length="699" mass="76945">MTQKLVRLVIVSLAITVTLLQAKTDNQEVSALNVMFTSLNSPSKLKGWKANGGDPCEDSWEGVKCKGSSVTELQLSGFELGGSRGYLLSNLKSLTTFDLSKNNLKGNIPYQLPPNIANLDFSENELDGNVPYSLSQMKNLQSINLGQNKLNGELPDMFQKLSKLETLDFSLNKLSGKLPQSFANLTSLKKLHLQDNRFTGDINVLRNLAIDDLNVEDNQFEGWIPNELKDIDSLLTGGNDWSTETAPPPPPGVKYGRKSSGSKDGGGITAGTGMVIAGACLGVLVLIIVLIALVSKKKSSLSPHFIDEDNSHHTPKFKSLTSHGSAQELRVDFGNDYKDGKSGDSGDENIHRIGSKGLKHYVSSRVMSFTDTEFANKLNAKRTTSTRSAVEFELSDLQSATANFSPGNLLGEGSIGRVYRAKYSDGRTLAVKKIDSTLFDSGKSEGITPIVMSLSKIRHQNIAELVGYCSEQGHNMLVYEYFRNGSLHEFLHLSDCFSKPLTWNTRVRIALGTARAVEYLHEACSPSVMHKNIKSSNILLDADLNPRLSDYGLSKFYLRTSQNLGEGYNAPEARDPSAYTPKSDVYSFGVVMLELLTGRVPFDGEKPRPERSLVRWATPQLHDIDALSNIADPALHGLYPPKSLSRFADIIALCVQVEPEFRPPMSEVVEALVRMVQRSSMKLKDDLSSSYRAHDDYDY</sequence>
<protein>
    <recommendedName>
        <fullName>Protein STRUBBELIG-RECEPTOR FAMILY 5</fullName>
    </recommendedName>
    <alternativeName>
        <fullName>Leucine-rich repeat receptor kinase-like protein SRF5</fullName>
    </alternativeName>
</protein>
<accession>Q6R2K1</accession>
<accession>O64550</accession>
<comment type="interaction">
    <interactant intactId="EBI-20651875">
        <id>Q6R2K1</id>
    </interactant>
    <interactant intactId="EBI-20653342">
        <id>A0A178UFM8</id>
        <label>At5g51560</label>
    </interactant>
    <organismsDiffer>false</organismsDiffer>
    <experiments>3</experiments>
</comment>
<comment type="interaction">
    <interactant intactId="EBI-20651875">
        <id>Q6R2K1</id>
    </interactant>
    <interactant intactId="EBI-617138">
        <id>Q94F62</id>
        <label>BAK1</label>
    </interactant>
    <organismsDiffer>false</organismsDiffer>
    <experiments>4</experiments>
</comment>
<comment type="interaction">
    <interactant intactId="EBI-20651875">
        <id>Q6R2K1</id>
    </interactant>
    <interactant intactId="EBI-16895926">
        <id>Q6XAT2</id>
        <label>ERL2</label>
    </interactant>
    <organismsDiffer>false</organismsDiffer>
    <experiments>3</experiments>
</comment>
<comment type="interaction">
    <interactant intactId="EBI-20651875">
        <id>Q6R2K1</id>
    </interactant>
    <interactant intactId="EBI-17072125">
        <id>Q8RWZ1</id>
        <label>SUB</label>
    </interactant>
    <organismsDiffer>false</organismsDiffer>
    <experiments>2</experiments>
</comment>
<comment type="subcellular location">
    <subcellularLocation>
        <location evidence="6">Membrane</location>
        <topology evidence="6">Single-pass membrane protein</topology>
    </subcellularLocation>
</comment>
<comment type="tissue specificity">
    <text evidence="5">Expressed in leaves and flowers.</text>
</comment>
<comment type="domain">
    <text>The protein kinase domain is predicted to be catalytically inactive.</text>
</comment>
<comment type="disruption phenotype">
    <text evidence="5">No visible phenotype.</text>
</comment>
<comment type="miscellaneous">
    <text>Cannot functionally replace STRUBBELIG.</text>
</comment>
<comment type="miscellaneous">
    <text>Over-expression of SRF5 led to male-sterility in cv. Columbia but not in cv. Landsberg.</text>
</comment>
<comment type="similarity">
    <text evidence="3">Belongs to the protein kinase superfamily. Ser/Thr protein kinase family.</text>
</comment>
<comment type="sequence caution" evidence="6">
    <conflict type="erroneous gene model prediction">
        <sequence resource="EMBL-CDS" id="AAC17069"/>
    </conflict>
</comment>
<dbReference type="EMBL" id="AY518290">
    <property type="protein sequence ID" value="AAR99873.1"/>
    <property type="molecule type" value="mRNA"/>
</dbReference>
<dbReference type="EMBL" id="AC002986">
    <property type="protein sequence ID" value="AAC17069.1"/>
    <property type="status" value="ALT_SEQ"/>
    <property type="molecule type" value="Genomic_DNA"/>
</dbReference>
<dbReference type="EMBL" id="CP002684">
    <property type="protein sequence ID" value="AEE36188.1"/>
    <property type="molecule type" value="Genomic_DNA"/>
</dbReference>
<dbReference type="PIR" id="T01057">
    <property type="entry name" value="T01057"/>
</dbReference>
<dbReference type="RefSeq" id="NP_178019.2">
    <property type="nucleotide sequence ID" value="NM_106547.3"/>
</dbReference>
<dbReference type="SMR" id="Q6R2K1"/>
<dbReference type="BioGRID" id="29457">
    <property type="interactions" value="18"/>
</dbReference>
<dbReference type="FunCoup" id="Q6R2K1">
    <property type="interactions" value="5"/>
</dbReference>
<dbReference type="IntAct" id="Q6R2K1">
    <property type="interactions" value="22"/>
</dbReference>
<dbReference type="STRING" id="3702.Q6R2K1"/>
<dbReference type="GlyCosmos" id="Q6R2K1">
    <property type="glycosylation" value="1 site, No reported glycans"/>
</dbReference>
<dbReference type="GlyGen" id="Q6R2K1">
    <property type="glycosylation" value="1 site"/>
</dbReference>
<dbReference type="iPTMnet" id="Q6R2K1"/>
<dbReference type="PaxDb" id="3702-AT1G78980.1"/>
<dbReference type="ProteomicsDB" id="226867"/>
<dbReference type="EnsemblPlants" id="AT1G78980.1">
    <property type="protein sequence ID" value="AT1G78980.1"/>
    <property type="gene ID" value="AT1G78980"/>
</dbReference>
<dbReference type="GeneID" id="844238"/>
<dbReference type="Gramene" id="AT1G78980.1">
    <property type="protein sequence ID" value="AT1G78980.1"/>
    <property type="gene ID" value="AT1G78980"/>
</dbReference>
<dbReference type="KEGG" id="ath:AT1G78980"/>
<dbReference type="Araport" id="AT1G78980"/>
<dbReference type="TAIR" id="AT1G78980">
    <property type="gene designation" value="SRF5"/>
</dbReference>
<dbReference type="eggNOG" id="ENOG502QSZ9">
    <property type="taxonomic scope" value="Eukaryota"/>
</dbReference>
<dbReference type="HOGENOM" id="CLU_000288_92_2_1"/>
<dbReference type="InParanoid" id="Q6R2K1"/>
<dbReference type="OMA" id="CSRPSAY"/>
<dbReference type="PhylomeDB" id="Q6R2K1"/>
<dbReference type="PRO" id="PR:Q6R2K1"/>
<dbReference type="Proteomes" id="UP000006548">
    <property type="component" value="Chromosome 1"/>
</dbReference>
<dbReference type="ExpressionAtlas" id="Q6R2K1">
    <property type="expression patterns" value="baseline and differential"/>
</dbReference>
<dbReference type="GO" id="GO:0016020">
    <property type="term" value="C:membrane"/>
    <property type="evidence" value="ECO:0007669"/>
    <property type="project" value="UniProtKB-SubCell"/>
</dbReference>
<dbReference type="GO" id="GO:0005524">
    <property type="term" value="F:ATP binding"/>
    <property type="evidence" value="ECO:0007669"/>
    <property type="project" value="UniProtKB-KW"/>
</dbReference>
<dbReference type="GO" id="GO:0004672">
    <property type="term" value="F:protein kinase activity"/>
    <property type="evidence" value="ECO:0007669"/>
    <property type="project" value="InterPro"/>
</dbReference>
<dbReference type="FunFam" id="3.80.10.10:FF:000062">
    <property type="entry name" value="protein STRUBBELIG-RECEPTOR FAMILY 3"/>
    <property type="match status" value="1"/>
</dbReference>
<dbReference type="FunFam" id="3.30.200.20:FF:000125">
    <property type="entry name" value="Protein STRUBBELIG-RECEPTOR FAMILY 8"/>
    <property type="match status" value="1"/>
</dbReference>
<dbReference type="FunFam" id="1.10.510.10:FF:000095">
    <property type="entry name" value="protein STRUBBELIG-RECEPTOR FAMILY 8"/>
    <property type="match status" value="1"/>
</dbReference>
<dbReference type="Gene3D" id="3.30.200.20">
    <property type="entry name" value="Phosphorylase Kinase, domain 1"/>
    <property type="match status" value="1"/>
</dbReference>
<dbReference type="Gene3D" id="3.80.10.10">
    <property type="entry name" value="Ribonuclease Inhibitor"/>
    <property type="match status" value="1"/>
</dbReference>
<dbReference type="Gene3D" id="1.10.510.10">
    <property type="entry name" value="Transferase(Phosphotransferase) domain 1"/>
    <property type="match status" value="1"/>
</dbReference>
<dbReference type="InterPro" id="IPR011009">
    <property type="entry name" value="Kinase-like_dom_sf"/>
</dbReference>
<dbReference type="InterPro" id="IPR001611">
    <property type="entry name" value="Leu-rich_rpt"/>
</dbReference>
<dbReference type="InterPro" id="IPR003591">
    <property type="entry name" value="Leu-rich_rpt_typical-subtyp"/>
</dbReference>
<dbReference type="InterPro" id="IPR032675">
    <property type="entry name" value="LRR_dom_sf"/>
</dbReference>
<dbReference type="InterPro" id="IPR013210">
    <property type="entry name" value="LRR_N_plant-typ"/>
</dbReference>
<dbReference type="InterPro" id="IPR046959">
    <property type="entry name" value="PRK1-6/SRF4-like"/>
</dbReference>
<dbReference type="InterPro" id="IPR000719">
    <property type="entry name" value="Prot_kinase_dom"/>
</dbReference>
<dbReference type="PANTHER" id="PTHR48007">
    <property type="entry name" value="LEUCINE-RICH REPEAT RECEPTOR-LIKE PROTEIN KINASE PXC1"/>
    <property type="match status" value="1"/>
</dbReference>
<dbReference type="PANTHER" id="PTHR48007:SF13">
    <property type="entry name" value="PROTEIN STRUBBELIG-RECEPTOR FAMILY 4"/>
    <property type="match status" value="1"/>
</dbReference>
<dbReference type="Pfam" id="PF00560">
    <property type="entry name" value="LRR_1"/>
    <property type="match status" value="1"/>
</dbReference>
<dbReference type="Pfam" id="PF13855">
    <property type="entry name" value="LRR_8"/>
    <property type="match status" value="1"/>
</dbReference>
<dbReference type="Pfam" id="PF08263">
    <property type="entry name" value="LRRNT_2"/>
    <property type="match status" value="1"/>
</dbReference>
<dbReference type="Pfam" id="PF00069">
    <property type="entry name" value="Pkinase"/>
    <property type="match status" value="1"/>
</dbReference>
<dbReference type="SMART" id="SM00369">
    <property type="entry name" value="LRR_TYP"/>
    <property type="match status" value="4"/>
</dbReference>
<dbReference type="SUPFAM" id="SSF52058">
    <property type="entry name" value="L domain-like"/>
    <property type="match status" value="1"/>
</dbReference>
<dbReference type="SUPFAM" id="SSF56112">
    <property type="entry name" value="Protein kinase-like (PK-like)"/>
    <property type="match status" value="1"/>
</dbReference>
<dbReference type="PROSITE" id="PS50011">
    <property type="entry name" value="PROTEIN_KINASE_DOM"/>
    <property type="match status" value="1"/>
</dbReference>